<sequence>AVCVSLLGAANIPPHPFNLINFMKMIRYTIPCEKTWGEYVDYGCYCGVGGSGRPIDALDRCCYVHDNCYGDAEKKHKCNPKMQSYSYKLTKRTTSAMVPQVLVHVLSVIVTARQPSASAILNTSSGTRILTPRDIADDI</sequence>
<organism>
    <name type="scientific">Bungarus candidus</name>
    <name type="common">Malayan krait</name>
    <dbReference type="NCBI Taxonomy" id="92438"/>
    <lineage>
        <taxon>Eukaryota</taxon>
        <taxon>Metazoa</taxon>
        <taxon>Chordata</taxon>
        <taxon>Craniata</taxon>
        <taxon>Vertebrata</taxon>
        <taxon>Euteleostomi</taxon>
        <taxon>Lepidosauria</taxon>
        <taxon>Squamata</taxon>
        <taxon>Bifurcata</taxon>
        <taxon>Unidentata</taxon>
        <taxon>Episquamata</taxon>
        <taxon>Toxicofera</taxon>
        <taxon>Serpentes</taxon>
        <taxon>Colubroidea</taxon>
        <taxon>Elapidae</taxon>
        <taxon>Bungarinae</taxon>
        <taxon>Bungarus</taxon>
    </lineage>
</organism>
<feature type="signal peptide" evidence="3">
    <location>
        <begin position="1" status="less than"/>
        <end position="9"/>
    </location>
</feature>
<feature type="propeptide" id="PRO_0000271449" evidence="2">
    <location>
        <begin position="10"/>
        <end position="17"/>
    </location>
</feature>
<feature type="chain" id="PRO_0000271450" description="Basic phospholipase A2 beta-bungarotoxin A2 chain" evidence="2">
    <location>
        <begin position="18"/>
        <end position="139"/>
    </location>
</feature>
<feature type="active site" evidence="4">
    <location>
        <position position="65"/>
    </location>
</feature>
<feature type="binding site" evidence="2">
    <location>
        <position position="45"/>
    </location>
    <ligand>
        <name>Ca(2+)</name>
        <dbReference type="ChEBI" id="CHEBI:29108"/>
    </ligand>
</feature>
<feature type="binding site" evidence="2">
    <location>
        <position position="47"/>
    </location>
    <ligand>
        <name>Ca(2+)</name>
        <dbReference type="ChEBI" id="CHEBI:29108"/>
    </ligand>
</feature>
<feature type="binding site" evidence="2">
    <location>
        <position position="49"/>
    </location>
    <ligand>
        <name>Ca(2+)</name>
        <dbReference type="ChEBI" id="CHEBI:29108"/>
    </ligand>
</feature>
<feature type="binding site" evidence="2">
    <location>
        <position position="66"/>
    </location>
    <ligand>
        <name>Ca(2+)</name>
        <dbReference type="ChEBI" id="CHEBI:29108"/>
    </ligand>
</feature>
<feature type="disulfide bond" description="Interchain (with a B chain)" evidence="2">
    <location>
        <position position="32"/>
    </location>
</feature>
<feature type="disulfide bond" evidence="2">
    <location>
        <begin position="46"/>
        <end position="62"/>
    </location>
</feature>
<feature type="non-terminal residue" evidence="6">
    <location>
        <position position="1"/>
    </location>
</feature>
<protein>
    <recommendedName>
        <fullName>Basic phospholipase A2 beta-bungarotoxin A2 chain</fullName>
        <shortName>Beta-BuTX A2 chain</shortName>
        <shortName>svPLA2</shortName>
        <ecNumber>3.1.1.4</ecNumber>
    </recommendedName>
    <alternativeName>
        <fullName>Phosphatidylcholine 2-acylhydrolase</fullName>
    </alternativeName>
</protein>
<name>PA2B2_BUNCA</name>
<evidence type="ECO:0000250" key="1"/>
<evidence type="ECO:0000250" key="2">
    <source>
        <dbReference type="UniProtKB" id="P00617"/>
    </source>
</evidence>
<evidence type="ECO:0000255" key="3"/>
<evidence type="ECO:0000255" key="4">
    <source>
        <dbReference type="PROSITE-ProRule" id="PRU10035"/>
    </source>
</evidence>
<evidence type="ECO:0000305" key="5"/>
<evidence type="ECO:0000305" key="6">
    <source ref="1"/>
</evidence>
<comment type="function">
    <text evidence="1">Snake venom phospholipase A2 (PLA2) that shows presynaptic neurotoxicity. PLA2 catalyzes the calcium-dependent hydrolysis of the 2-acyl groups in 3-sn-phosphoglycerides (By similarity).</text>
</comment>
<comment type="catalytic activity">
    <reaction evidence="4">
        <text>a 1,2-diacyl-sn-glycero-3-phosphocholine + H2O = a 1-acyl-sn-glycero-3-phosphocholine + a fatty acid + H(+)</text>
        <dbReference type="Rhea" id="RHEA:15801"/>
        <dbReference type="ChEBI" id="CHEBI:15377"/>
        <dbReference type="ChEBI" id="CHEBI:15378"/>
        <dbReference type="ChEBI" id="CHEBI:28868"/>
        <dbReference type="ChEBI" id="CHEBI:57643"/>
        <dbReference type="ChEBI" id="CHEBI:58168"/>
        <dbReference type="EC" id="3.1.1.4"/>
    </reaction>
</comment>
<comment type="cofactor">
    <cofactor evidence="2">
        <name>Ca(2+)</name>
        <dbReference type="ChEBI" id="CHEBI:29108"/>
    </cofactor>
    <text evidence="2">Binds 1 Ca(2+) ion.</text>
</comment>
<comment type="subunit">
    <text evidence="2">Heterodimer; disulfide-linked. The A chains have phospholipase A2 activity and the B chains show homology with the basic protease inhibitors.</text>
</comment>
<comment type="subcellular location">
    <subcellularLocation>
        <location evidence="6">Secreted</location>
    </subcellularLocation>
</comment>
<comment type="tissue specificity">
    <text evidence="6">Expressed by the venom gland.</text>
</comment>
<comment type="similarity">
    <text evidence="5">Belongs to the phospholipase A2 family. Group I subfamily. D49 sub-subfamily.</text>
</comment>
<comment type="caution">
    <text evidence="5">In contrast to other phospholipases, it lacks the typical Asp active site (Asp-&gt;Gln in position 114).</text>
</comment>
<proteinExistence type="evidence at transcript level"/>
<accession>Q8AY47</accession>
<reference key="1">
    <citation type="submission" date="2001-10" db="EMBL/GenBank/DDBJ databases">
        <title>Structural and functional genomics of Bungarus candidus.</title>
        <authorList>
            <person name="Tsai I.-H."/>
            <person name="Wang Y.-M."/>
            <person name="Hsu H.Y."/>
        </authorList>
    </citation>
    <scope>NUCLEOTIDE SEQUENCE [MRNA]</scope>
    <source>
        <tissue>Venom gland</tissue>
    </source>
</reference>
<dbReference type="EC" id="3.1.1.4"/>
<dbReference type="EMBL" id="AY057881">
    <property type="protein sequence ID" value="AAL30063.1"/>
    <property type="molecule type" value="mRNA"/>
</dbReference>
<dbReference type="SMR" id="Q8AY47"/>
<dbReference type="GO" id="GO:0005576">
    <property type="term" value="C:extracellular region"/>
    <property type="evidence" value="ECO:0007669"/>
    <property type="project" value="UniProtKB-SubCell"/>
</dbReference>
<dbReference type="GO" id="GO:0005509">
    <property type="term" value="F:calcium ion binding"/>
    <property type="evidence" value="ECO:0007669"/>
    <property type="project" value="InterPro"/>
</dbReference>
<dbReference type="GO" id="GO:0004623">
    <property type="term" value="F:phospholipase A2 activity"/>
    <property type="evidence" value="ECO:0007669"/>
    <property type="project" value="UniProtKB-EC"/>
</dbReference>
<dbReference type="GO" id="GO:0090729">
    <property type="term" value="F:toxin activity"/>
    <property type="evidence" value="ECO:0007669"/>
    <property type="project" value="UniProtKB-KW"/>
</dbReference>
<dbReference type="GO" id="GO:0050482">
    <property type="term" value="P:arachidonate secretion"/>
    <property type="evidence" value="ECO:0007669"/>
    <property type="project" value="InterPro"/>
</dbReference>
<dbReference type="GO" id="GO:0016042">
    <property type="term" value="P:lipid catabolic process"/>
    <property type="evidence" value="ECO:0007669"/>
    <property type="project" value="UniProtKB-KW"/>
</dbReference>
<dbReference type="GO" id="GO:0006644">
    <property type="term" value="P:phospholipid metabolic process"/>
    <property type="evidence" value="ECO:0007669"/>
    <property type="project" value="InterPro"/>
</dbReference>
<dbReference type="CDD" id="cd00125">
    <property type="entry name" value="PLA2c"/>
    <property type="match status" value="1"/>
</dbReference>
<dbReference type="Gene3D" id="1.20.90.10">
    <property type="entry name" value="Phospholipase A2 domain"/>
    <property type="match status" value="1"/>
</dbReference>
<dbReference type="InterPro" id="IPR001211">
    <property type="entry name" value="PLipase_A2"/>
</dbReference>
<dbReference type="InterPro" id="IPR016090">
    <property type="entry name" value="PLipase_A2_dom"/>
</dbReference>
<dbReference type="InterPro" id="IPR036444">
    <property type="entry name" value="PLipase_A2_dom_sf"/>
</dbReference>
<dbReference type="InterPro" id="IPR033113">
    <property type="entry name" value="PLipase_A2_His_AS"/>
</dbReference>
<dbReference type="PANTHER" id="PTHR11716">
    <property type="entry name" value="PHOSPHOLIPASE A2 FAMILY MEMBER"/>
    <property type="match status" value="1"/>
</dbReference>
<dbReference type="PANTHER" id="PTHR11716:SF47">
    <property type="entry name" value="PHOSPHOLIPASE A2-ALPHA"/>
    <property type="match status" value="1"/>
</dbReference>
<dbReference type="Pfam" id="PF00068">
    <property type="entry name" value="Phospholip_A2_1"/>
    <property type="match status" value="1"/>
</dbReference>
<dbReference type="PRINTS" id="PR00389">
    <property type="entry name" value="PHPHLIPASEA2"/>
</dbReference>
<dbReference type="SMART" id="SM00085">
    <property type="entry name" value="PA2c"/>
    <property type="match status" value="1"/>
</dbReference>
<dbReference type="SUPFAM" id="SSF48619">
    <property type="entry name" value="Phospholipase A2, PLA2"/>
    <property type="match status" value="1"/>
</dbReference>
<dbReference type="PROSITE" id="PS00118">
    <property type="entry name" value="PA2_HIS"/>
    <property type="match status" value="1"/>
</dbReference>
<keyword id="KW-0106">Calcium</keyword>
<keyword id="KW-1015">Disulfide bond</keyword>
<keyword id="KW-0378">Hydrolase</keyword>
<keyword id="KW-0442">Lipid degradation</keyword>
<keyword id="KW-0443">Lipid metabolism</keyword>
<keyword id="KW-0479">Metal-binding</keyword>
<keyword id="KW-0528">Neurotoxin</keyword>
<keyword id="KW-0638">Presynaptic neurotoxin</keyword>
<keyword id="KW-0964">Secreted</keyword>
<keyword id="KW-0732">Signal</keyword>
<keyword id="KW-0800">Toxin</keyword>